<accession>Q1QD10</accession>
<gene>
    <name evidence="1" type="primary">surE</name>
    <name type="ordered locus">Pcryo_0660</name>
</gene>
<keyword id="KW-0963">Cytoplasm</keyword>
<keyword id="KW-0378">Hydrolase</keyword>
<keyword id="KW-0479">Metal-binding</keyword>
<keyword id="KW-0547">Nucleotide-binding</keyword>
<name>SURE_PSYCK</name>
<reference key="1">
    <citation type="submission" date="2006-03" db="EMBL/GenBank/DDBJ databases">
        <title>Complete sequence of chromosome of Psychrobacter cryohalolentis K5.</title>
        <authorList>
            <consortium name="US DOE Joint Genome Institute"/>
            <person name="Copeland A."/>
            <person name="Lucas S."/>
            <person name="Lapidus A."/>
            <person name="Barry K."/>
            <person name="Detter J.C."/>
            <person name="Glavina T."/>
            <person name="Hammon N."/>
            <person name="Israni S."/>
            <person name="Dalin E."/>
            <person name="Tice H."/>
            <person name="Pitluck S."/>
            <person name="Brettin T."/>
            <person name="Bruce D."/>
            <person name="Han C."/>
            <person name="Tapia R."/>
            <person name="Sims D.R."/>
            <person name="Gilna P."/>
            <person name="Schmutz J."/>
            <person name="Larimer F."/>
            <person name="Land M."/>
            <person name="Hauser L."/>
            <person name="Kyrpides N."/>
            <person name="Kim E."/>
            <person name="Richardson P."/>
        </authorList>
    </citation>
    <scope>NUCLEOTIDE SEQUENCE [LARGE SCALE GENOMIC DNA]</scope>
    <source>
        <strain>ATCC BAA-1226 / DSM 17306 / VKM B-2378 / K5</strain>
    </source>
</reference>
<organism>
    <name type="scientific">Psychrobacter cryohalolentis (strain ATCC BAA-1226 / DSM 17306 / VKM B-2378 / K5)</name>
    <dbReference type="NCBI Taxonomy" id="335284"/>
    <lineage>
        <taxon>Bacteria</taxon>
        <taxon>Pseudomonadati</taxon>
        <taxon>Pseudomonadota</taxon>
        <taxon>Gammaproteobacteria</taxon>
        <taxon>Moraxellales</taxon>
        <taxon>Moraxellaceae</taxon>
        <taxon>Psychrobacter</taxon>
    </lineage>
</organism>
<dbReference type="EC" id="3.1.3.5" evidence="1"/>
<dbReference type="EMBL" id="CP000323">
    <property type="protein sequence ID" value="ABE74443.1"/>
    <property type="molecule type" value="Genomic_DNA"/>
</dbReference>
<dbReference type="RefSeq" id="WP_011513010.1">
    <property type="nucleotide sequence ID" value="NC_007969.1"/>
</dbReference>
<dbReference type="SMR" id="Q1QD10"/>
<dbReference type="STRING" id="335284.Pcryo_0660"/>
<dbReference type="KEGG" id="pcr:Pcryo_0660"/>
<dbReference type="eggNOG" id="COG0496">
    <property type="taxonomic scope" value="Bacteria"/>
</dbReference>
<dbReference type="HOGENOM" id="CLU_045192_1_2_6"/>
<dbReference type="Proteomes" id="UP000002425">
    <property type="component" value="Chromosome"/>
</dbReference>
<dbReference type="GO" id="GO:0005737">
    <property type="term" value="C:cytoplasm"/>
    <property type="evidence" value="ECO:0007669"/>
    <property type="project" value="UniProtKB-SubCell"/>
</dbReference>
<dbReference type="GO" id="GO:0008254">
    <property type="term" value="F:3'-nucleotidase activity"/>
    <property type="evidence" value="ECO:0007669"/>
    <property type="project" value="TreeGrafter"/>
</dbReference>
<dbReference type="GO" id="GO:0008253">
    <property type="term" value="F:5'-nucleotidase activity"/>
    <property type="evidence" value="ECO:0007669"/>
    <property type="project" value="UniProtKB-UniRule"/>
</dbReference>
<dbReference type="GO" id="GO:0004309">
    <property type="term" value="F:exopolyphosphatase activity"/>
    <property type="evidence" value="ECO:0007669"/>
    <property type="project" value="TreeGrafter"/>
</dbReference>
<dbReference type="GO" id="GO:0046872">
    <property type="term" value="F:metal ion binding"/>
    <property type="evidence" value="ECO:0007669"/>
    <property type="project" value="UniProtKB-UniRule"/>
</dbReference>
<dbReference type="GO" id="GO:0000166">
    <property type="term" value="F:nucleotide binding"/>
    <property type="evidence" value="ECO:0007669"/>
    <property type="project" value="UniProtKB-KW"/>
</dbReference>
<dbReference type="Gene3D" id="3.40.1210.10">
    <property type="entry name" value="Survival protein SurE-like phosphatase/nucleotidase"/>
    <property type="match status" value="1"/>
</dbReference>
<dbReference type="HAMAP" id="MF_00060">
    <property type="entry name" value="SurE"/>
    <property type="match status" value="1"/>
</dbReference>
<dbReference type="InterPro" id="IPR030048">
    <property type="entry name" value="SurE"/>
</dbReference>
<dbReference type="InterPro" id="IPR002828">
    <property type="entry name" value="SurE-like_Pase/nucleotidase"/>
</dbReference>
<dbReference type="InterPro" id="IPR036523">
    <property type="entry name" value="SurE-like_sf"/>
</dbReference>
<dbReference type="NCBIfam" id="TIGR00087">
    <property type="entry name" value="surE"/>
    <property type="match status" value="1"/>
</dbReference>
<dbReference type="PANTHER" id="PTHR30457">
    <property type="entry name" value="5'-NUCLEOTIDASE SURE"/>
    <property type="match status" value="1"/>
</dbReference>
<dbReference type="PANTHER" id="PTHR30457:SF12">
    <property type="entry name" value="5'_3'-NUCLEOTIDASE SURE"/>
    <property type="match status" value="1"/>
</dbReference>
<dbReference type="Pfam" id="PF01975">
    <property type="entry name" value="SurE"/>
    <property type="match status" value="1"/>
</dbReference>
<dbReference type="SUPFAM" id="SSF64167">
    <property type="entry name" value="SurE-like"/>
    <property type="match status" value="1"/>
</dbReference>
<evidence type="ECO:0000255" key="1">
    <source>
        <dbReference type="HAMAP-Rule" id="MF_00060"/>
    </source>
</evidence>
<protein>
    <recommendedName>
        <fullName evidence="1">5'-nucleotidase SurE</fullName>
        <ecNumber evidence="1">3.1.3.5</ecNumber>
    </recommendedName>
    <alternativeName>
        <fullName evidence="1">Nucleoside 5'-monophosphate phosphohydrolase</fullName>
    </alternativeName>
</protein>
<sequence>MKILMSNDDGVYAPGLLALYEALSTMAEVMVVAPNSEQSGCASALSITTPLYTHQLPSGFIAVNGTPADCIYLALNEIYSDTDFDCVITGINSGANLGQDVLFSGTFGAALTAQLFGIPAIATSLVGGGAKSSEQECERHYQMAASEIVKLLTDTPILDICKNLPYHVLNVNIPDVSNADEINGRKMTVLGHRKIARPVHHVVDPRGRDAYWLSLRKRQDIWADNTDHVSSGTTMTDDQAVAAGYISLSPVRLHHTPAATLDMLSALML</sequence>
<proteinExistence type="inferred from homology"/>
<comment type="function">
    <text evidence="1">Nucleotidase that shows phosphatase activity on nucleoside 5'-monophosphates.</text>
</comment>
<comment type="catalytic activity">
    <reaction evidence="1">
        <text>a ribonucleoside 5'-phosphate + H2O = a ribonucleoside + phosphate</text>
        <dbReference type="Rhea" id="RHEA:12484"/>
        <dbReference type="ChEBI" id="CHEBI:15377"/>
        <dbReference type="ChEBI" id="CHEBI:18254"/>
        <dbReference type="ChEBI" id="CHEBI:43474"/>
        <dbReference type="ChEBI" id="CHEBI:58043"/>
        <dbReference type="EC" id="3.1.3.5"/>
    </reaction>
</comment>
<comment type="cofactor">
    <cofactor evidence="1">
        <name>a divalent metal cation</name>
        <dbReference type="ChEBI" id="CHEBI:60240"/>
    </cofactor>
    <text evidence="1">Binds 1 divalent metal cation per subunit.</text>
</comment>
<comment type="subcellular location">
    <subcellularLocation>
        <location evidence="1">Cytoplasm</location>
    </subcellularLocation>
</comment>
<comment type="similarity">
    <text evidence="1">Belongs to the SurE nucleotidase family.</text>
</comment>
<feature type="chain" id="PRO_1000007773" description="5'-nucleotidase SurE">
    <location>
        <begin position="1"/>
        <end position="269"/>
    </location>
</feature>
<feature type="binding site" evidence="1">
    <location>
        <position position="8"/>
    </location>
    <ligand>
        <name>a divalent metal cation</name>
        <dbReference type="ChEBI" id="CHEBI:60240"/>
    </ligand>
</feature>
<feature type="binding site" evidence="1">
    <location>
        <position position="9"/>
    </location>
    <ligand>
        <name>a divalent metal cation</name>
        <dbReference type="ChEBI" id="CHEBI:60240"/>
    </ligand>
</feature>
<feature type="binding site" evidence="1">
    <location>
        <position position="39"/>
    </location>
    <ligand>
        <name>a divalent metal cation</name>
        <dbReference type="ChEBI" id="CHEBI:60240"/>
    </ligand>
</feature>
<feature type="binding site" evidence="1">
    <location>
        <position position="92"/>
    </location>
    <ligand>
        <name>a divalent metal cation</name>
        <dbReference type="ChEBI" id="CHEBI:60240"/>
    </ligand>
</feature>